<proteinExistence type="inferred from homology"/>
<evidence type="ECO:0000255" key="1">
    <source>
        <dbReference type="HAMAP-Rule" id="MF_01306"/>
    </source>
</evidence>
<evidence type="ECO:0000256" key="2">
    <source>
        <dbReference type="SAM" id="MobiDB-lite"/>
    </source>
</evidence>
<evidence type="ECO:0000305" key="3"/>
<name>RS4_WOLSU</name>
<gene>
    <name evidence="1" type="primary">rpsD</name>
    <name type="ordered locus">WS1693</name>
</gene>
<dbReference type="EMBL" id="BX571661">
    <property type="protein sequence ID" value="CAE10720.1"/>
    <property type="molecule type" value="Genomic_DNA"/>
</dbReference>
<dbReference type="RefSeq" id="WP_011139504.1">
    <property type="nucleotide sequence ID" value="NC_005090.1"/>
</dbReference>
<dbReference type="SMR" id="Q7M8F6"/>
<dbReference type="STRING" id="273121.WS1693"/>
<dbReference type="KEGG" id="wsu:WS1693"/>
<dbReference type="eggNOG" id="COG0522">
    <property type="taxonomic scope" value="Bacteria"/>
</dbReference>
<dbReference type="HOGENOM" id="CLU_092403_0_2_7"/>
<dbReference type="Proteomes" id="UP000000422">
    <property type="component" value="Chromosome"/>
</dbReference>
<dbReference type="GO" id="GO:0015935">
    <property type="term" value="C:small ribosomal subunit"/>
    <property type="evidence" value="ECO:0007669"/>
    <property type="project" value="InterPro"/>
</dbReference>
<dbReference type="GO" id="GO:0019843">
    <property type="term" value="F:rRNA binding"/>
    <property type="evidence" value="ECO:0007669"/>
    <property type="project" value="UniProtKB-UniRule"/>
</dbReference>
<dbReference type="GO" id="GO:0003735">
    <property type="term" value="F:structural constituent of ribosome"/>
    <property type="evidence" value="ECO:0007669"/>
    <property type="project" value="InterPro"/>
</dbReference>
<dbReference type="GO" id="GO:0042274">
    <property type="term" value="P:ribosomal small subunit biogenesis"/>
    <property type="evidence" value="ECO:0007669"/>
    <property type="project" value="TreeGrafter"/>
</dbReference>
<dbReference type="GO" id="GO:0006412">
    <property type="term" value="P:translation"/>
    <property type="evidence" value="ECO:0007669"/>
    <property type="project" value="UniProtKB-UniRule"/>
</dbReference>
<dbReference type="CDD" id="cd00165">
    <property type="entry name" value="S4"/>
    <property type="match status" value="1"/>
</dbReference>
<dbReference type="FunFam" id="1.10.1050.10:FF:000001">
    <property type="entry name" value="30S ribosomal protein S4"/>
    <property type="match status" value="1"/>
</dbReference>
<dbReference type="FunFam" id="3.10.290.10:FF:000001">
    <property type="entry name" value="30S ribosomal protein S4"/>
    <property type="match status" value="1"/>
</dbReference>
<dbReference type="Gene3D" id="1.10.1050.10">
    <property type="entry name" value="Ribosomal Protein S4 Delta 41, Chain A, domain 1"/>
    <property type="match status" value="1"/>
</dbReference>
<dbReference type="Gene3D" id="3.10.290.10">
    <property type="entry name" value="RNA-binding S4 domain"/>
    <property type="match status" value="1"/>
</dbReference>
<dbReference type="HAMAP" id="MF_01306_B">
    <property type="entry name" value="Ribosomal_uS4_B"/>
    <property type="match status" value="1"/>
</dbReference>
<dbReference type="InterPro" id="IPR022801">
    <property type="entry name" value="Ribosomal_uS4"/>
</dbReference>
<dbReference type="InterPro" id="IPR005709">
    <property type="entry name" value="Ribosomal_uS4_bac-type"/>
</dbReference>
<dbReference type="InterPro" id="IPR018079">
    <property type="entry name" value="Ribosomal_uS4_CS"/>
</dbReference>
<dbReference type="InterPro" id="IPR001912">
    <property type="entry name" value="Ribosomal_uS4_N"/>
</dbReference>
<dbReference type="InterPro" id="IPR002942">
    <property type="entry name" value="S4_RNA-bd"/>
</dbReference>
<dbReference type="InterPro" id="IPR036986">
    <property type="entry name" value="S4_RNA-bd_sf"/>
</dbReference>
<dbReference type="NCBIfam" id="NF003717">
    <property type="entry name" value="PRK05327.1"/>
    <property type="match status" value="1"/>
</dbReference>
<dbReference type="NCBIfam" id="TIGR01017">
    <property type="entry name" value="rpsD_bact"/>
    <property type="match status" value="1"/>
</dbReference>
<dbReference type="PANTHER" id="PTHR11831">
    <property type="entry name" value="30S 40S RIBOSOMAL PROTEIN"/>
    <property type="match status" value="1"/>
</dbReference>
<dbReference type="PANTHER" id="PTHR11831:SF4">
    <property type="entry name" value="SMALL RIBOSOMAL SUBUNIT PROTEIN US4M"/>
    <property type="match status" value="1"/>
</dbReference>
<dbReference type="Pfam" id="PF00163">
    <property type="entry name" value="Ribosomal_S4"/>
    <property type="match status" value="1"/>
</dbReference>
<dbReference type="Pfam" id="PF01479">
    <property type="entry name" value="S4"/>
    <property type="match status" value="1"/>
</dbReference>
<dbReference type="SMART" id="SM01390">
    <property type="entry name" value="Ribosomal_S4"/>
    <property type="match status" value="1"/>
</dbReference>
<dbReference type="SMART" id="SM00363">
    <property type="entry name" value="S4"/>
    <property type="match status" value="1"/>
</dbReference>
<dbReference type="SUPFAM" id="SSF55174">
    <property type="entry name" value="Alpha-L RNA-binding motif"/>
    <property type="match status" value="1"/>
</dbReference>
<dbReference type="PROSITE" id="PS00632">
    <property type="entry name" value="RIBOSOMAL_S4"/>
    <property type="match status" value="1"/>
</dbReference>
<dbReference type="PROSITE" id="PS50889">
    <property type="entry name" value="S4"/>
    <property type="match status" value="1"/>
</dbReference>
<feature type="chain" id="PRO_0000132495" description="Small ribosomal subunit protein uS4">
    <location>
        <begin position="1"/>
        <end position="208"/>
    </location>
</feature>
<feature type="domain" description="S4 RNA-binding" evidence="1">
    <location>
        <begin position="98"/>
        <end position="161"/>
    </location>
</feature>
<feature type="region of interest" description="Disordered" evidence="2">
    <location>
        <begin position="30"/>
        <end position="51"/>
    </location>
</feature>
<sequence>MARYRGPVEKIERRFGVSLNLKGERRLAGKSSLEKRPYAPGQHGQRRSKISEYGLQLREKQKAKFMYGISEKQFRSIFQEANRLEGNTGELLIKLLERRLDNVVYRMGFATTRRFARQMVSHGHVLVDGKRVNIPSYMVLPGQKVEIREKSKNNPQVQRSIELTKQTGIAPWVDVDQAKVFGIFTRLPEREEVVIPVEERLIVELYSK</sequence>
<reference key="1">
    <citation type="journal article" date="2003" name="Proc. Natl. Acad. Sci. U.S.A.">
        <title>Complete genome sequence and analysis of Wolinella succinogenes.</title>
        <authorList>
            <person name="Baar C."/>
            <person name="Eppinger M."/>
            <person name="Raddatz G."/>
            <person name="Simon J."/>
            <person name="Lanz C."/>
            <person name="Klimmek O."/>
            <person name="Nandakumar R."/>
            <person name="Gross R."/>
            <person name="Rosinus A."/>
            <person name="Keller H."/>
            <person name="Jagtap P."/>
            <person name="Linke B."/>
            <person name="Meyer F."/>
            <person name="Lederer H."/>
            <person name="Schuster S.C."/>
        </authorList>
    </citation>
    <scope>NUCLEOTIDE SEQUENCE [LARGE SCALE GENOMIC DNA]</scope>
    <source>
        <strain>ATCC 29543 / DSM 1740 / CCUG 13145 / JCM 31913 / LMG 7466 / NCTC 11488 / FDC 602W</strain>
    </source>
</reference>
<accession>Q7M8F6</accession>
<keyword id="KW-1185">Reference proteome</keyword>
<keyword id="KW-0687">Ribonucleoprotein</keyword>
<keyword id="KW-0689">Ribosomal protein</keyword>
<keyword id="KW-0694">RNA-binding</keyword>
<keyword id="KW-0699">rRNA-binding</keyword>
<organism>
    <name type="scientific">Wolinella succinogenes (strain ATCC 29543 / DSM 1740 / CCUG 13145 / JCM 31913 / LMG 7466 / NCTC 11488 / FDC 602W)</name>
    <name type="common">Vibrio succinogenes</name>
    <dbReference type="NCBI Taxonomy" id="273121"/>
    <lineage>
        <taxon>Bacteria</taxon>
        <taxon>Pseudomonadati</taxon>
        <taxon>Campylobacterota</taxon>
        <taxon>Epsilonproteobacteria</taxon>
        <taxon>Campylobacterales</taxon>
        <taxon>Helicobacteraceae</taxon>
        <taxon>Wolinella</taxon>
    </lineage>
</organism>
<protein>
    <recommendedName>
        <fullName evidence="1">Small ribosomal subunit protein uS4</fullName>
    </recommendedName>
    <alternativeName>
        <fullName evidence="3">30S ribosomal protein S4</fullName>
    </alternativeName>
</protein>
<comment type="function">
    <text evidence="1">One of the primary rRNA binding proteins, it binds directly to 16S rRNA where it nucleates assembly of the body of the 30S subunit.</text>
</comment>
<comment type="function">
    <text evidence="1">With S5 and S12 plays an important role in translational accuracy.</text>
</comment>
<comment type="subunit">
    <text evidence="1">Part of the 30S ribosomal subunit. Contacts protein S5. The interaction surface between S4 and S5 is involved in control of translational fidelity.</text>
</comment>
<comment type="similarity">
    <text evidence="1">Belongs to the universal ribosomal protein uS4 family.</text>
</comment>